<keyword id="KW-0067">ATP-binding</keyword>
<keyword id="KW-0143">Chaperone</keyword>
<keyword id="KW-0963">Cytoplasm</keyword>
<keyword id="KW-0547">Nucleotide-binding</keyword>
<keyword id="KW-0346">Stress response</keyword>
<accession>B5EQZ5</accession>
<sequence>MAASKETMQFQTEINQLLQLMIHSLYSNKEIFLRELISNASDACDKLRFEALADPALLTGDSELKVEVDFDPEAGTITVRDNGIGMNRDEVIANIGTIAKSGTREFFERLSGDQTKDAKLIGQFGVGFYSAFIVADRVSLNTRRAGMEAEHGVRWESDGTGTYTLETLDLPARGTEIVLHLREEERQDLLSAWRLRSIINKYSDHIPLSIRMRKIGEGGKPGDEWETVNKASALWQRSKSEISDDEYKEFYRYVSHDYGDPLTWSHNHVEGRLEYTSLLFIPAKAPFDLWDHNHPHGIKLYVQRVFIMDDAEQLLPRYLRFVRGVIDSSDLPLNVSREILQGNRVIDQMRSGSVKRILGLLEEMAEKEPEKYQTFWNEFGRVLKEGPGEDYSNREQIARLLRFASTHTDTDTQNVSLADYLARMAEGQDKIYYITADSFLAAKNSPQLELLRKKGIEVLLLSDRVDEWLTSHLPEFEGKALTSVAKGALDLGAIETEEERKSQEETEKDAEGLVERIKNALGERVETVRVSHRLTSSPACIVLGERDMALYMQQLLKQAGHEISSTKPVLEINPTHPMLARIEGEKDDTRFAEWSALLLDQAILAEGGQLEDPAGFVARINQLMLALAG</sequence>
<reference key="1">
    <citation type="submission" date="2008-08" db="EMBL/GenBank/DDBJ databases">
        <title>Complete sequence of Acidithiobacillus ferrooxidans ATCC 53993.</title>
        <authorList>
            <person name="Lucas S."/>
            <person name="Copeland A."/>
            <person name="Lapidus A."/>
            <person name="Glavina del Rio T."/>
            <person name="Dalin E."/>
            <person name="Tice H."/>
            <person name="Bruce D."/>
            <person name="Goodwin L."/>
            <person name="Pitluck S."/>
            <person name="Sims D."/>
            <person name="Brettin T."/>
            <person name="Detter J.C."/>
            <person name="Han C."/>
            <person name="Kuske C.R."/>
            <person name="Larimer F."/>
            <person name="Land M."/>
            <person name="Hauser L."/>
            <person name="Kyrpides N."/>
            <person name="Lykidis A."/>
            <person name="Borole A.P."/>
        </authorList>
    </citation>
    <scope>NUCLEOTIDE SEQUENCE [LARGE SCALE GENOMIC DNA]</scope>
    <source>
        <strain>ATCC 53993 / BNL-5-31</strain>
    </source>
</reference>
<comment type="function">
    <text evidence="1">Molecular chaperone. Has ATPase activity.</text>
</comment>
<comment type="subunit">
    <text evidence="1">Homodimer.</text>
</comment>
<comment type="subcellular location">
    <subcellularLocation>
        <location evidence="1">Cytoplasm</location>
    </subcellularLocation>
</comment>
<comment type="similarity">
    <text evidence="1">Belongs to the heat shock protein 90 family.</text>
</comment>
<protein>
    <recommendedName>
        <fullName evidence="1">Chaperone protein HtpG</fullName>
    </recommendedName>
    <alternativeName>
        <fullName evidence="1">Heat shock protein HtpG</fullName>
    </alternativeName>
    <alternativeName>
        <fullName evidence="1">High temperature protein G</fullName>
    </alternativeName>
</protein>
<gene>
    <name evidence="1" type="primary">htpG</name>
    <name type="ordered locus">Lferr_2755</name>
</gene>
<name>HTPG_ACIF5</name>
<feature type="chain" id="PRO_1000127022" description="Chaperone protein HtpG">
    <location>
        <begin position="1"/>
        <end position="629"/>
    </location>
</feature>
<feature type="region of interest" description="A; substrate-binding" evidence="1">
    <location>
        <begin position="1"/>
        <end position="337"/>
    </location>
</feature>
<feature type="region of interest" description="B" evidence="1">
    <location>
        <begin position="338"/>
        <end position="554"/>
    </location>
</feature>
<feature type="region of interest" description="C" evidence="1">
    <location>
        <begin position="555"/>
        <end position="629"/>
    </location>
</feature>
<proteinExistence type="inferred from homology"/>
<evidence type="ECO:0000255" key="1">
    <source>
        <dbReference type="HAMAP-Rule" id="MF_00505"/>
    </source>
</evidence>
<dbReference type="EMBL" id="CP001132">
    <property type="protein sequence ID" value="ACH84946.1"/>
    <property type="molecule type" value="Genomic_DNA"/>
</dbReference>
<dbReference type="RefSeq" id="WP_012537630.1">
    <property type="nucleotide sequence ID" value="NC_011206.1"/>
</dbReference>
<dbReference type="SMR" id="B5EQZ5"/>
<dbReference type="GeneID" id="65282145"/>
<dbReference type="KEGG" id="afe:Lferr_2755"/>
<dbReference type="eggNOG" id="COG0326">
    <property type="taxonomic scope" value="Bacteria"/>
</dbReference>
<dbReference type="HOGENOM" id="CLU_006684_3_0_6"/>
<dbReference type="GO" id="GO:0005737">
    <property type="term" value="C:cytoplasm"/>
    <property type="evidence" value="ECO:0007669"/>
    <property type="project" value="UniProtKB-SubCell"/>
</dbReference>
<dbReference type="GO" id="GO:0005524">
    <property type="term" value="F:ATP binding"/>
    <property type="evidence" value="ECO:0007669"/>
    <property type="project" value="UniProtKB-UniRule"/>
</dbReference>
<dbReference type="GO" id="GO:0016887">
    <property type="term" value="F:ATP hydrolysis activity"/>
    <property type="evidence" value="ECO:0007669"/>
    <property type="project" value="InterPro"/>
</dbReference>
<dbReference type="GO" id="GO:0140662">
    <property type="term" value="F:ATP-dependent protein folding chaperone"/>
    <property type="evidence" value="ECO:0007669"/>
    <property type="project" value="InterPro"/>
</dbReference>
<dbReference type="GO" id="GO:0051082">
    <property type="term" value="F:unfolded protein binding"/>
    <property type="evidence" value="ECO:0007669"/>
    <property type="project" value="UniProtKB-UniRule"/>
</dbReference>
<dbReference type="CDD" id="cd16927">
    <property type="entry name" value="HATPase_Hsp90-like"/>
    <property type="match status" value="1"/>
</dbReference>
<dbReference type="FunFam" id="3.30.230.80:FF:000002">
    <property type="entry name" value="Molecular chaperone HtpG"/>
    <property type="match status" value="1"/>
</dbReference>
<dbReference type="FunFam" id="3.30.565.10:FF:000009">
    <property type="entry name" value="Molecular chaperone HtpG"/>
    <property type="match status" value="1"/>
</dbReference>
<dbReference type="Gene3D" id="3.30.230.80">
    <property type="match status" value="1"/>
</dbReference>
<dbReference type="Gene3D" id="3.40.50.11260">
    <property type="match status" value="1"/>
</dbReference>
<dbReference type="Gene3D" id="1.20.120.790">
    <property type="entry name" value="Heat shock protein 90, C-terminal domain"/>
    <property type="match status" value="1"/>
</dbReference>
<dbReference type="Gene3D" id="3.30.565.10">
    <property type="entry name" value="Histidine kinase-like ATPase, C-terminal domain"/>
    <property type="match status" value="1"/>
</dbReference>
<dbReference type="HAMAP" id="MF_00505">
    <property type="entry name" value="HSP90"/>
    <property type="match status" value="1"/>
</dbReference>
<dbReference type="InterPro" id="IPR036890">
    <property type="entry name" value="HATPase_C_sf"/>
</dbReference>
<dbReference type="InterPro" id="IPR019805">
    <property type="entry name" value="Heat_shock_protein_90_CS"/>
</dbReference>
<dbReference type="InterPro" id="IPR037196">
    <property type="entry name" value="HSP90_C"/>
</dbReference>
<dbReference type="InterPro" id="IPR001404">
    <property type="entry name" value="Hsp90_fam"/>
</dbReference>
<dbReference type="InterPro" id="IPR020575">
    <property type="entry name" value="Hsp90_N"/>
</dbReference>
<dbReference type="InterPro" id="IPR020568">
    <property type="entry name" value="Ribosomal_Su5_D2-typ_SF"/>
</dbReference>
<dbReference type="NCBIfam" id="NF003555">
    <property type="entry name" value="PRK05218.1"/>
    <property type="match status" value="1"/>
</dbReference>
<dbReference type="PANTHER" id="PTHR11528">
    <property type="entry name" value="HEAT SHOCK PROTEIN 90 FAMILY MEMBER"/>
    <property type="match status" value="1"/>
</dbReference>
<dbReference type="Pfam" id="PF13589">
    <property type="entry name" value="HATPase_c_3"/>
    <property type="match status" value="1"/>
</dbReference>
<dbReference type="Pfam" id="PF00183">
    <property type="entry name" value="HSP90"/>
    <property type="match status" value="1"/>
</dbReference>
<dbReference type="PIRSF" id="PIRSF002583">
    <property type="entry name" value="Hsp90"/>
    <property type="match status" value="1"/>
</dbReference>
<dbReference type="PRINTS" id="PR00775">
    <property type="entry name" value="HEATSHOCK90"/>
</dbReference>
<dbReference type="SMART" id="SM00387">
    <property type="entry name" value="HATPase_c"/>
    <property type="match status" value="1"/>
</dbReference>
<dbReference type="SUPFAM" id="SSF55874">
    <property type="entry name" value="ATPase domain of HSP90 chaperone/DNA topoisomerase II/histidine kinase"/>
    <property type="match status" value="1"/>
</dbReference>
<dbReference type="SUPFAM" id="SSF110942">
    <property type="entry name" value="HSP90 C-terminal domain"/>
    <property type="match status" value="1"/>
</dbReference>
<dbReference type="SUPFAM" id="SSF54211">
    <property type="entry name" value="Ribosomal protein S5 domain 2-like"/>
    <property type="match status" value="1"/>
</dbReference>
<dbReference type="PROSITE" id="PS00298">
    <property type="entry name" value="HSP90"/>
    <property type="match status" value="1"/>
</dbReference>
<organism>
    <name type="scientific">Acidithiobacillus ferrooxidans (strain ATCC 53993 / BNL-5-31)</name>
    <name type="common">Leptospirillum ferrooxidans (ATCC 53993)</name>
    <dbReference type="NCBI Taxonomy" id="380394"/>
    <lineage>
        <taxon>Bacteria</taxon>
        <taxon>Pseudomonadati</taxon>
        <taxon>Pseudomonadota</taxon>
        <taxon>Acidithiobacillia</taxon>
        <taxon>Acidithiobacillales</taxon>
        <taxon>Acidithiobacillaceae</taxon>
        <taxon>Acidithiobacillus</taxon>
    </lineage>
</organism>